<name>RS20_ECOSM</name>
<proteinExistence type="inferred from homology"/>
<comment type="function">
    <text evidence="1">Binds directly to 16S ribosomal RNA.</text>
</comment>
<comment type="similarity">
    <text evidence="1">Belongs to the bacterial ribosomal protein bS20 family.</text>
</comment>
<accession>B1LFV4</accession>
<feature type="chain" id="PRO_1000126445" description="Small ribosomal subunit protein bS20">
    <location>
        <begin position="1"/>
        <end position="87"/>
    </location>
</feature>
<feature type="region of interest" description="Disordered" evidence="2">
    <location>
        <begin position="1"/>
        <end position="26"/>
    </location>
</feature>
<dbReference type="EMBL" id="CP000970">
    <property type="protein sequence ID" value="ACB19241.1"/>
    <property type="molecule type" value="Genomic_DNA"/>
</dbReference>
<dbReference type="RefSeq" id="WP_001274021.1">
    <property type="nucleotide sequence ID" value="NC_010498.1"/>
</dbReference>
<dbReference type="SMR" id="B1LFV4"/>
<dbReference type="GeneID" id="93777413"/>
<dbReference type="KEGG" id="ecm:EcSMS35_0022"/>
<dbReference type="HOGENOM" id="CLU_160655_4_0_6"/>
<dbReference type="Proteomes" id="UP000007011">
    <property type="component" value="Chromosome"/>
</dbReference>
<dbReference type="GO" id="GO:0005829">
    <property type="term" value="C:cytosol"/>
    <property type="evidence" value="ECO:0007669"/>
    <property type="project" value="TreeGrafter"/>
</dbReference>
<dbReference type="GO" id="GO:0015935">
    <property type="term" value="C:small ribosomal subunit"/>
    <property type="evidence" value="ECO:0007669"/>
    <property type="project" value="TreeGrafter"/>
</dbReference>
<dbReference type="GO" id="GO:0070181">
    <property type="term" value="F:small ribosomal subunit rRNA binding"/>
    <property type="evidence" value="ECO:0007669"/>
    <property type="project" value="TreeGrafter"/>
</dbReference>
<dbReference type="GO" id="GO:0003735">
    <property type="term" value="F:structural constituent of ribosome"/>
    <property type="evidence" value="ECO:0007669"/>
    <property type="project" value="InterPro"/>
</dbReference>
<dbReference type="GO" id="GO:0006412">
    <property type="term" value="P:translation"/>
    <property type="evidence" value="ECO:0007669"/>
    <property type="project" value="UniProtKB-UniRule"/>
</dbReference>
<dbReference type="FunFam" id="1.20.58.110:FF:000001">
    <property type="entry name" value="30S ribosomal protein S20"/>
    <property type="match status" value="1"/>
</dbReference>
<dbReference type="Gene3D" id="1.20.58.110">
    <property type="entry name" value="Ribosomal protein S20"/>
    <property type="match status" value="1"/>
</dbReference>
<dbReference type="HAMAP" id="MF_00500">
    <property type="entry name" value="Ribosomal_bS20"/>
    <property type="match status" value="1"/>
</dbReference>
<dbReference type="InterPro" id="IPR002583">
    <property type="entry name" value="Ribosomal_bS20"/>
</dbReference>
<dbReference type="InterPro" id="IPR036510">
    <property type="entry name" value="Ribosomal_bS20_sf"/>
</dbReference>
<dbReference type="NCBIfam" id="TIGR00029">
    <property type="entry name" value="S20"/>
    <property type="match status" value="1"/>
</dbReference>
<dbReference type="PANTHER" id="PTHR33398">
    <property type="entry name" value="30S RIBOSOMAL PROTEIN S20"/>
    <property type="match status" value="1"/>
</dbReference>
<dbReference type="PANTHER" id="PTHR33398:SF1">
    <property type="entry name" value="SMALL RIBOSOMAL SUBUNIT PROTEIN BS20C"/>
    <property type="match status" value="1"/>
</dbReference>
<dbReference type="Pfam" id="PF01649">
    <property type="entry name" value="Ribosomal_S20p"/>
    <property type="match status" value="1"/>
</dbReference>
<dbReference type="SUPFAM" id="SSF46992">
    <property type="entry name" value="Ribosomal protein S20"/>
    <property type="match status" value="1"/>
</dbReference>
<sequence>MANIKSAKKRAIQSEKARKHNASRRSMMRTFIKKVYAAIEAGDKAAAQKAFNEMQPIVDRQAAKGLIHKNKAARHKANLTAQINKLA</sequence>
<organism>
    <name type="scientific">Escherichia coli (strain SMS-3-5 / SECEC)</name>
    <dbReference type="NCBI Taxonomy" id="439855"/>
    <lineage>
        <taxon>Bacteria</taxon>
        <taxon>Pseudomonadati</taxon>
        <taxon>Pseudomonadota</taxon>
        <taxon>Gammaproteobacteria</taxon>
        <taxon>Enterobacterales</taxon>
        <taxon>Enterobacteriaceae</taxon>
        <taxon>Escherichia</taxon>
    </lineage>
</organism>
<protein>
    <recommendedName>
        <fullName evidence="1">Small ribosomal subunit protein bS20</fullName>
    </recommendedName>
    <alternativeName>
        <fullName evidence="3">30S ribosomal protein S20</fullName>
    </alternativeName>
</protein>
<reference key="1">
    <citation type="journal article" date="2008" name="J. Bacteriol.">
        <title>Insights into the environmental resistance gene pool from the genome sequence of the multidrug-resistant environmental isolate Escherichia coli SMS-3-5.</title>
        <authorList>
            <person name="Fricke W.F."/>
            <person name="Wright M.S."/>
            <person name="Lindell A.H."/>
            <person name="Harkins D.M."/>
            <person name="Baker-Austin C."/>
            <person name="Ravel J."/>
            <person name="Stepanauskas R."/>
        </authorList>
    </citation>
    <scope>NUCLEOTIDE SEQUENCE [LARGE SCALE GENOMIC DNA]</scope>
    <source>
        <strain>SMS-3-5 / SECEC</strain>
    </source>
</reference>
<evidence type="ECO:0000255" key="1">
    <source>
        <dbReference type="HAMAP-Rule" id="MF_00500"/>
    </source>
</evidence>
<evidence type="ECO:0000256" key="2">
    <source>
        <dbReference type="SAM" id="MobiDB-lite"/>
    </source>
</evidence>
<evidence type="ECO:0000305" key="3"/>
<keyword id="KW-0687">Ribonucleoprotein</keyword>
<keyword id="KW-0689">Ribosomal protein</keyword>
<keyword id="KW-0694">RNA-binding</keyword>
<keyword id="KW-0699">rRNA-binding</keyword>
<gene>
    <name evidence="1" type="primary">rpsT</name>
    <name type="ordered locus">EcSMS35_0022</name>
</gene>